<reference key="1">
    <citation type="submission" date="2007-02" db="EMBL/GenBank/DDBJ databases">
        <title>Complete sequence of chromosome 1 of Rhodobacter sphaeroides ATCC 17029.</title>
        <authorList>
            <person name="Copeland A."/>
            <person name="Lucas S."/>
            <person name="Lapidus A."/>
            <person name="Barry K."/>
            <person name="Detter J.C."/>
            <person name="Glavina del Rio T."/>
            <person name="Hammon N."/>
            <person name="Israni S."/>
            <person name="Dalin E."/>
            <person name="Tice H."/>
            <person name="Pitluck S."/>
            <person name="Kiss H."/>
            <person name="Brettin T."/>
            <person name="Bruce D."/>
            <person name="Han C."/>
            <person name="Tapia R."/>
            <person name="Gilna P."/>
            <person name="Schmutz J."/>
            <person name="Larimer F."/>
            <person name="Land M."/>
            <person name="Hauser L."/>
            <person name="Kyrpides N."/>
            <person name="Mikhailova N."/>
            <person name="Richardson P."/>
            <person name="Mackenzie C."/>
            <person name="Choudhary M."/>
            <person name="Donohue T.J."/>
            <person name="Kaplan S."/>
        </authorList>
    </citation>
    <scope>NUCLEOTIDE SEQUENCE [LARGE SCALE GENOMIC DNA]</scope>
    <source>
        <strain>ATCC 17029 / ATH 2.4.9</strain>
    </source>
</reference>
<sequence length="44" mass="5050">MKRTFQPSNLVRARRHGFRARMATKGGRLVLNARRAKGRKKLSA</sequence>
<keyword id="KW-0687">Ribonucleoprotein</keyword>
<keyword id="KW-0689">Ribosomal protein</keyword>
<name>RL34_CERS1</name>
<evidence type="ECO:0000255" key="1">
    <source>
        <dbReference type="HAMAP-Rule" id="MF_00391"/>
    </source>
</evidence>
<evidence type="ECO:0000305" key="2"/>
<dbReference type="EMBL" id="CP000577">
    <property type="protein sequence ID" value="ABN77822.1"/>
    <property type="molecule type" value="Genomic_DNA"/>
</dbReference>
<dbReference type="RefSeq" id="WP_002721419.1">
    <property type="nucleotide sequence ID" value="NC_009049.1"/>
</dbReference>
<dbReference type="SMR" id="A3PNA6"/>
<dbReference type="GeneID" id="67447833"/>
<dbReference type="KEGG" id="rsh:Rsph17029_2720"/>
<dbReference type="HOGENOM" id="CLU_129938_2_1_5"/>
<dbReference type="GO" id="GO:1990904">
    <property type="term" value="C:ribonucleoprotein complex"/>
    <property type="evidence" value="ECO:0007669"/>
    <property type="project" value="UniProtKB-KW"/>
</dbReference>
<dbReference type="GO" id="GO:0005840">
    <property type="term" value="C:ribosome"/>
    <property type="evidence" value="ECO:0007669"/>
    <property type="project" value="UniProtKB-KW"/>
</dbReference>
<dbReference type="GO" id="GO:0003735">
    <property type="term" value="F:structural constituent of ribosome"/>
    <property type="evidence" value="ECO:0007669"/>
    <property type="project" value="InterPro"/>
</dbReference>
<dbReference type="GO" id="GO:0006412">
    <property type="term" value="P:translation"/>
    <property type="evidence" value="ECO:0007669"/>
    <property type="project" value="UniProtKB-UniRule"/>
</dbReference>
<dbReference type="FunFam" id="1.10.287.3980:FF:000001">
    <property type="entry name" value="Mitochondrial ribosomal protein L34"/>
    <property type="match status" value="1"/>
</dbReference>
<dbReference type="Gene3D" id="1.10.287.3980">
    <property type="match status" value="1"/>
</dbReference>
<dbReference type="HAMAP" id="MF_00391">
    <property type="entry name" value="Ribosomal_bL34"/>
    <property type="match status" value="1"/>
</dbReference>
<dbReference type="InterPro" id="IPR000271">
    <property type="entry name" value="Ribosomal_bL34"/>
</dbReference>
<dbReference type="InterPro" id="IPR020939">
    <property type="entry name" value="Ribosomal_bL34_CS"/>
</dbReference>
<dbReference type="NCBIfam" id="TIGR01030">
    <property type="entry name" value="rpmH_bact"/>
    <property type="match status" value="1"/>
</dbReference>
<dbReference type="PANTHER" id="PTHR14503:SF4">
    <property type="entry name" value="LARGE RIBOSOMAL SUBUNIT PROTEIN BL34M"/>
    <property type="match status" value="1"/>
</dbReference>
<dbReference type="PANTHER" id="PTHR14503">
    <property type="entry name" value="MITOCHONDRIAL RIBOSOMAL PROTEIN 34 FAMILY MEMBER"/>
    <property type="match status" value="1"/>
</dbReference>
<dbReference type="Pfam" id="PF00468">
    <property type="entry name" value="Ribosomal_L34"/>
    <property type="match status" value="1"/>
</dbReference>
<dbReference type="PROSITE" id="PS00784">
    <property type="entry name" value="RIBOSOMAL_L34"/>
    <property type="match status" value="1"/>
</dbReference>
<proteinExistence type="inferred from homology"/>
<protein>
    <recommendedName>
        <fullName evidence="1">Large ribosomal subunit protein bL34</fullName>
    </recommendedName>
    <alternativeName>
        <fullName evidence="2">50S ribosomal protein L34</fullName>
    </alternativeName>
</protein>
<comment type="similarity">
    <text evidence="1">Belongs to the bacterial ribosomal protein bL34 family.</text>
</comment>
<organism>
    <name type="scientific">Cereibacter sphaeroides (strain ATCC 17029 / ATH 2.4.9)</name>
    <name type="common">Rhodobacter sphaeroides</name>
    <dbReference type="NCBI Taxonomy" id="349101"/>
    <lineage>
        <taxon>Bacteria</taxon>
        <taxon>Pseudomonadati</taxon>
        <taxon>Pseudomonadota</taxon>
        <taxon>Alphaproteobacteria</taxon>
        <taxon>Rhodobacterales</taxon>
        <taxon>Paracoccaceae</taxon>
        <taxon>Cereibacter</taxon>
    </lineage>
</organism>
<feature type="chain" id="PRO_1000013425" description="Large ribosomal subunit protein bL34">
    <location>
        <begin position="1"/>
        <end position="44"/>
    </location>
</feature>
<gene>
    <name evidence="1" type="primary">rpmH</name>
    <name type="ordered locus">Rsph17029_2720</name>
</gene>
<accession>A3PNA6</accession>